<accession>Q824A4</accession>
<feature type="chain" id="PRO_0000342224" description="LL-diaminopimelate aminotransferase">
    <location>
        <begin position="1"/>
        <end position="395"/>
    </location>
</feature>
<feature type="binding site" evidence="1">
    <location>
        <position position="14"/>
    </location>
    <ligand>
        <name>substrate</name>
    </ligand>
</feature>
<feature type="binding site" evidence="1">
    <location>
        <position position="41"/>
    </location>
    <ligand>
        <name>substrate</name>
    </ligand>
</feature>
<feature type="binding site" evidence="1">
    <location>
        <position position="71"/>
    </location>
    <ligand>
        <name>pyridoxal 5'-phosphate</name>
        <dbReference type="ChEBI" id="CHEBI:597326"/>
    </ligand>
</feature>
<feature type="binding site" evidence="1">
    <location>
        <begin position="104"/>
        <end position="105"/>
    </location>
    <ligand>
        <name>pyridoxal 5'-phosphate</name>
        <dbReference type="ChEBI" id="CHEBI:597326"/>
    </ligand>
</feature>
<feature type="binding site" evidence="1">
    <location>
        <position position="105"/>
    </location>
    <ligand>
        <name>substrate</name>
    </ligand>
</feature>
<feature type="binding site" evidence="1">
    <location>
        <position position="128"/>
    </location>
    <ligand>
        <name>pyridoxal 5'-phosphate</name>
        <dbReference type="ChEBI" id="CHEBI:597326"/>
    </ligand>
</feature>
<feature type="binding site" evidence="1">
    <location>
        <position position="128"/>
    </location>
    <ligand>
        <name>substrate</name>
    </ligand>
</feature>
<feature type="binding site" evidence="1">
    <location>
        <position position="174"/>
    </location>
    <ligand>
        <name>pyridoxal 5'-phosphate</name>
        <dbReference type="ChEBI" id="CHEBI:597326"/>
    </ligand>
</feature>
<feature type="binding site" evidence="1">
    <location>
        <position position="174"/>
    </location>
    <ligand>
        <name>substrate</name>
    </ligand>
</feature>
<feature type="binding site" evidence="1">
    <location>
        <position position="205"/>
    </location>
    <ligand>
        <name>pyridoxal 5'-phosphate</name>
        <dbReference type="ChEBI" id="CHEBI:597326"/>
    </ligand>
</feature>
<feature type="binding site" evidence="1">
    <location>
        <begin position="233"/>
        <end position="235"/>
    </location>
    <ligand>
        <name>pyridoxal 5'-phosphate</name>
        <dbReference type="ChEBI" id="CHEBI:597326"/>
    </ligand>
</feature>
<feature type="binding site" evidence="1">
    <location>
        <position position="244"/>
    </location>
    <ligand>
        <name>pyridoxal 5'-phosphate</name>
        <dbReference type="ChEBI" id="CHEBI:597326"/>
    </ligand>
</feature>
<feature type="binding site" evidence="1">
    <location>
        <position position="275"/>
    </location>
    <ligand>
        <name>pyridoxal 5'-phosphate</name>
        <dbReference type="ChEBI" id="CHEBI:597326"/>
    </ligand>
</feature>
<feature type="binding site" evidence="1">
    <location>
        <position position="275"/>
    </location>
    <ligand>
        <name>substrate</name>
    </ligand>
</feature>
<feature type="binding site" evidence="1">
    <location>
        <position position="368"/>
    </location>
    <ligand>
        <name>substrate</name>
    </ligand>
</feature>
<feature type="modified residue" description="N6-(pyridoxal phosphate)lysine" evidence="1">
    <location>
        <position position="236"/>
    </location>
</feature>
<evidence type="ECO:0000255" key="1">
    <source>
        <dbReference type="HAMAP-Rule" id="MF_01642"/>
    </source>
</evidence>
<name>DAPAT_CHLCV</name>
<gene>
    <name evidence="1" type="primary">dapL</name>
    <name type="ordered locus">CCA_00249</name>
</gene>
<comment type="function">
    <text evidence="1">Involved in the synthesis of meso-diaminopimelate (m-DAP or DL-DAP), required for both lysine and peptidoglycan biosynthesis. Catalyzes the direct conversion of tetrahydrodipicolinate to LL-diaminopimelate.</text>
</comment>
<comment type="catalytic activity">
    <reaction evidence="1">
        <text>(2S,6S)-2,6-diaminopimelate + 2-oxoglutarate = (S)-2,3,4,5-tetrahydrodipicolinate + L-glutamate + H2O + H(+)</text>
        <dbReference type="Rhea" id="RHEA:23988"/>
        <dbReference type="ChEBI" id="CHEBI:15377"/>
        <dbReference type="ChEBI" id="CHEBI:15378"/>
        <dbReference type="ChEBI" id="CHEBI:16810"/>
        <dbReference type="ChEBI" id="CHEBI:16845"/>
        <dbReference type="ChEBI" id="CHEBI:29985"/>
        <dbReference type="ChEBI" id="CHEBI:57609"/>
        <dbReference type="EC" id="2.6.1.83"/>
    </reaction>
</comment>
<comment type="cofactor">
    <cofactor evidence="1">
        <name>pyridoxal 5'-phosphate</name>
        <dbReference type="ChEBI" id="CHEBI:597326"/>
    </cofactor>
</comment>
<comment type="pathway">
    <text evidence="1">Amino-acid biosynthesis; L-lysine biosynthesis via DAP pathway; LL-2,6-diaminopimelate from (S)-tetrahydrodipicolinate (aminotransferase route): step 1/1.</text>
</comment>
<comment type="subunit">
    <text evidence="1">Homodimer.</text>
</comment>
<comment type="similarity">
    <text evidence="1">Belongs to the class-I pyridoxal-phosphate-dependent aminotransferase family. LL-diaminopimelate aminotransferase subfamily.</text>
</comment>
<reference key="1">
    <citation type="journal article" date="2003" name="Nucleic Acids Res.">
        <title>Genome sequence of Chlamydophila caviae (Chlamydia psittaci GPIC): examining the role of niche-specific genes in the evolution of the Chlamydiaceae.</title>
        <authorList>
            <person name="Read T.D."/>
            <person name="Myers G.S.A."/>
            <person name="Brunham R.C."/>
            <person name="Nelson W.C."/>
            <person name="Paulsen I.T."/>
            <person name="Heidelberg J.F."/>
            <person name="Holtzapple E.K."/>
            <person name="Khouri H.M."/>
            <person name="Federova N.B."/>
            <person name="Carty H.A."/>
            <person name="Umayam L.A."/>
            <person name="Haft D.H."/>
            <person name="Peterson J.D."/>
            <person name="Beanan M.J."/>
            <person name="White O."/>
            <person name="Salzberg S.L."/>
            <person name="Hsia R.-C."/>
            <person name="McClarty G."/>
            <person name="Rank R.G."/>
            <person name="Bavoil P.M."/>
            <person name="Fraser C.M."/>
        </authorList>
    </citation>
    <scope>NUCLEOTIDE SEQUENCE [LARGE SCALE GENOMIC DNA]</scope>
    <source>
        <strain>ATCC VR-813 / DSM 19441 / 03DC25 / GPIC</strain>
    </source>
</reference>
<keyword id="KW-0032">Aminotransferase</keyword>
<keyword id="KW-0663">Pyridoxal phosphate</keyword>
<keyword id="KW-0808">Transferase</keyword>
<sequence>MQRNNNFSKLETSYLFSSIRQKIRAFREAHPDVSIIDLSIGDTTQPLHTAVMDTFTKSVQKLGNPETYRGYGPELGLSTLREKLSEVFYQGKVSPEEIFISDGAKMDIFRLLSLFGPGKTIAVQDPSYPVYIDTALLAGAKKVIKLPCRKETDFFPVIPQGEEIDIFCLCSPNNPTGTVLTKEQLEELITYANSHGSIILFDAAYSAFISDPSLPKSIFEIPEARSCAIEINSFSKSLGFSGVRLGWNVVPKDLRYSNGLPIIDDWKRFLHTTFNGASLPVQEAAITGASLFPNLEAIAHYRHNSSLLREALQKAEFSVYGGEHAPYLWVEVPKILPDEDFFDFFLTQYHIAITPGKGFGACGKGYVRFSSLGKIEDIMAACQRLTLTSVYDRMV</sequence>
<dbReference type="EC" id="2.6.1.83" evidence="1"/>
<dbReference type="EMBL" id="AE015925">
    <property type="protein sequence ID" value="AAP05000.1"/>
    <property type="molecule type" value="Genomic_DNA"/>
</dbReference>
<dbReference type="RefSeq" id="WP_011006218.1">
    <property type="nucleotide sequence ID" value="NC_003361.3"/>
</dbReference>
<dbReference type="SMR" id="Q824A4"/>
<dbReference type="STRING" id="227941.CCA_00249"/>
<dbReference type="KEGG" id="cca:CCA_00249"/>
<dbReference type="eggNOG" id="COG0436">
    <property type="taxonomic scope" value="Bacteria"/>
</dbReference>
<dbReference type="HOGENOM" id="CLU_051433_0_0_0"/>
<dbReference type="OrthoDB" id="9813612at2"/>
<dbReference type="UniPathway" id="UPA00034">
    <property type="reaction ID" value="UER00466"/>
</dbReference>
<dbReference type="Proteomes" id="UP000002193">
    <property type="component" value="Chromosome"/>
</dbReference>
<dbReference type="GO" id="GO:0010285">
    <property type="term" value="F:L,L-diaminopimelate aminotransferase activity"/>
    <property type="evidence" value="ECO:0007669"/>
    <property type="project" value="UniProtKB-UniRule"/>
</dbReference>
<dbReference type="GO" id="GO:0030170">
    <property type="term" value="F:pyridoxal phosphate binding"/>
    <property type="evidence" value="ECO:0007669"/>
    <property type="project" value="UniProtKB-UniRule"/>
</dbReference>
<dbReference type="GO" id="GO:0033362">
    <property type="term" value="P:lysine biosynthetic process via diaminopimelate, diaminopimelate-aminotransferase pathway"/>
    <property type="evidence" value="ECO:0007669"/>
    <property type="project" value="UniProtKB-UniRule"/>
</dbReference>
<dbReference type="CDD" id="cd00609">
    <property type="entry name" value="AAT_like"/>
    <property type="match status" value="1"/>
</dbReference>
<dbReference type="FunFam" id="3.40.640.10:FF:000099">
    <property type="entry name" value="LL-diaminopimelate aminotransferase, chloroplastic"/>
    <property type="match status" value="1"/>
</dbReference>
<dbReference type="Gene3D" id="3.90.1150.10">
    <property type="entry name" value="Aspartate Aminotransferase, domain 1"/>
    <property type="match status" value="1"/>
</dbReference>
<dbReference type="Gene3D" id="3.40.640.10">
    <property type="entry name" value="Type I PLP-dependent aspartate aminotransferase-like (Major domain)"/>
    <property type="match status" value="1"/>
</dbReference>
<dbReference type="HAMAP" id="MF_01642">
    <property type="entry name" value="DapL_aminotrans_1"/>
    <property type="match status" value="1"/>
</dbReference>
<dbReference type="InterPro" id="IPR004839">
    <property type="entry name" value="Aminotransferase_I/II_large"/>
</dbReference>
<dbReference type="InterPro" id="IPR019942">
    <property type="entry name" value="DapL/ALD1"/>
</dbReference>
<dbReference type="InterPro" id="IPR015424">
    <property type="entry name" value="PyrdxlP-dep_Trfase"/>
</dbReference>
<dbReference type="InterPro" id="IPR015421">
    <property type="entry name" value="PyrdxlP-dep_Trfase_major"/>
</dbReference>
<dbReference type="InterPro" id="IPR015422">
    <property type="entry name" value="PyrdxlP-dep_Trfase_small"/>
</dbReference>
<dbReference type="NCBIfam" id="TIGR03542">
    <property type="entry name" value="DAPAT_plant"/>
    <property type="match status" value="1"/>
</dbReference>
<dbReference type="PANTHER" id="PTHR43144">
    <property type="entry name" value="AMINOTRANSFERASE"/>
    <property type="match status" value="1"/>
</dbReference>
<dbReference type="Pfam" id="PF00155">
    <property type="entry name" value="Aminotran_1_2"/>
    <property type="match status" value="1"/>
</dbReference>
<dbReference type="SUPFAM" id="SSF53383">
    <property type="entry name" value="PLP-dependent transferases"/>
    <property type="match status" value="1"/>
</dbReference>
<proteinExistence type="inferred from homology"/>
<protein>
    <recommendedName>
        <fullName evidence="1">LL-diaminopimelate aminotransferase</fullName>
        <shortName evidence="1">DAP-AT</shortName>
        <shortName evidence="1">DAP-aminotransferase</shortName>
        <shortName evidence="1">LL-DAP-aminotransferase</shortName>
        <ecNumber evidence="1">2.6.1.83</ecNumber>
    </recommendedName>
</protein>
<organism>
    <name type="scientific">Chlamydia caviae (strain ATCC VR-813 / DSM 19441 / 03DC25 / GPIC)</name>
    <name type="common">Chlamydophila caviae</name>
    <dbReference type="NCBI Taxonomy" id="227941"/>
    <lineage>
        <taxon>Bacteria</taxon>
        <taxon>Pseudomonadati</taxon>
        <taxon>Chlamydiota</taxon>
        <taxon>Chlamydiia</taxon>
        <taxon>Chlamydiales</taxon>
        <taxon>Chlamydiaceae</taxon>
        <taxon>Chlamydia/Chlamydophila group</taxon>
        <taxon>Chlamydia</taxon>
    </lineage>
</organism>